<accession>Q8G0S7</accession>
<accession>G0K9T4</accession>
<keyword id="KW-0413">Isomerase</keyword>
<dbReference type="EC" id="5.3.1.6" evidence="1"/>
<dbReference type="EMBL" id="AE014291">
    <property type="protein sequence ID" value="AAN29932.1"/>
    <property type="molecule type" value="Genomic_DNA"/>
</dbReference>
<dbReference type="EMBL" id="CP002997">
    <property type="protein sequence ID" value="AEM18350.1"/>
    <property type="molecule type" value="Genomic_DNA"/>
</dbReference>
<dbReference type="RefSeq" id="WP_004688337.1">
    <property type="nucleotide sequence ID" value="NZ_KN046804.1"/>
</dbReference>
<dbReference type="SMR" id="Q8G0S7"/>
<dbReference type="GeneID" id="97533723"/>
<dbReference type="KEGG" id="bms:BR1010"/>
<dbReference type="KEGG" id="bsi:BS1330_I1006"/>
<dbReference type="PATRIC" id="fig|204722.21.peg.746"/>
<dbReference type="HOGENOM" id="CLU_056590_1_0_5"/>
<dbReference type="PhylomeDB" id="Q8G0S7"/>
<dbReference type="UniPathway" id="UPA00115">
    <property type="reaction ID" value="UER00412"/>
</dbReference>
<dbReference type="Proteomes" id="UP000007104">
    <property type="component" value="Chromosome I"/>
</dbReference>
<dbReference type="GO" id="GO:0004751">
    <property type="term" value="F:ribose-5-phosphate isomerase activity"/>
    <property type="evidence" value="ECO:0007669"/>
    <property type="project" value="UniProtKB-UniRule"/>
</dbReference>
<dbReference type="GO" id="GO:0009052">
    <property type="term" value="P:pentose-phosphate shunt, non-oxidative branch"/>
    <property type="evidence" value="ECO:0007669"/>
    <property type="project" value="UniProtKB-UniRule"/>
</dbReference>
<dbReference type="CDD" id="cd01398">
    <property type="entry name" value="RPI_A"/>
    <property type="match status" value="1"/>
</dbReference>
<dbReference type="FunFam" id="3.40.50.1360:FF:000001">
    <property type="entry name" value="Ribose-5-phosphate isomerase A"/>
    <property type="match status" value="1"/>
</dbReference>
<dbReference type="Gene3D" id="3.30.70.260">
    <property type="match status" value="1"/>
</dbReference>
<dbReference type="Gene3D" id="3.40.50.1360">
    <property type="match status" value="1"/>
</dbReference>
<dbReference type="HAMAP" id="MF_00170">
    <property type="entry name" value="Rib_5P_isom_A"/>
    <property type="match status" value="1"/>
</dbReference>
<dbReference type="InterPro" id="IPR037171">
    <property type="entry name" value="NagB/RpiA_transferase-like"/>
</dbReference>
<dbReference type="InterPro" id="IPR050262">
    <property type="entry name" value="Ribose-5P_isomerase"/>
</dbReference>
<dbReference type="InterPro" id="IPR020672">
    <property type="entry name" value="Ribose5P_isomerase_typA_subgr"/>
</dbReference>
<dbReference type="InterPro" id="IPR004788">
    <property type="entry name" value="Ribose5P_isomerase_type_A"/>
</dbReference>
<dbReference type="NCBIfam" id="NF001924">
    <property type="entry name" value="PRK00702.1"/>
    <property type="match status" value="1"/>
</dbReference>
<dbReference type="NCBIfam" id="TIGR00021">
    <property type="entry name" value="rpiA"/>
    <property type="match status" value="1"/>
</dbReference>
<dbReference type="PANTHER" id="PTHR43748">
    <property type="entry name" value="RIBOSE-5-PHOSPHATE ISOMERASE 3, CHLOROPLASTIC-RELATED"/>
    <property type="match status" value="1"/>
</dbReference>
<dbReference type="PANTHER" id="PTHR43748:SF3">
    <property type="entry name" value="RIBOSE-5-PHOSPHATE ISOMERASE 3, CHLOROPLASTIC-RELATED"/>
    <property type="match status" value="1"/>
</dbReference>
<dbReference type="Pfam" id="PF06026">
    <property type="entry name" value="Rib_5-P_isom_A"/>
    <property type="match status" value="1"/>
</dbReference>
<dbReference type="SUPFAM" id="SSF75445">
    <property type="entry name" value="D-ribose-5-phosphate isomerase (RpiA), lid domain"/>
    <property type="match status" value="1"/>
</dbReference>
<dbReference type="SUPFAM" id="SSF100950">
    <property type="entry name" value="NagB/RpiA/CoA transferase-like"/>
    <property type="match status" value="1"/>
</dbReference>
<proteinExistence type="inferred from homology"/>
<organism>
    <name type="scientific">Brucella suis biovar 1 (strain 1330)</name>
    <dbReference type="NCBI Taxonomy" id="204722"/>
    <lineage>
        <taxon>Bacteria</taxon>
        <taxon>Pseudomonadati</taxon>
        <taxon>Pseudomonadota</taxon>
        <taxon>Alphaproteobacteria</taxon>
        <taxon>Hyphomicrobiales</taxon>
        <taxon>Brucellaceae</taxon>
        <taxon>Brucella/Ochrobactrum group</taxon>
        <taxon>Brucella</taxon>
    </lineage>
</organism>
<feature type="chain" id="PRO_0000158397" description="Ribose-5-phosphate isomerase A">
    <location>
        <begin position="1"/>
        <end position="232"/>
    </location>
</feature>
<feature type="active site" description="Proton acceptor" evidence="1">
    <location>
        <position position="106"/>
    </location>
</feature>
<feature type="binding site" evidence="1">
    <location>
        <begin position="29"/>
        <end position="32"/>
    </location>
    <ligand>
        <name>substrate</name>
    </ligand>
</feature>
<feature type="binding site" evidence="1">
    <location>
        <begin position="84"/>
        <end position="87"/>
    </location>
    <ligand>
        <name>substrate</name>
    </ligand>
</feature>
<feature type="binding site" evidence="1">
    <location>
        <begin position="97"/>
        <end position="100"/>
    </location>
    <ligand>
        <name>substrate</name>
    </ligand>
</feature>
<feature type="binding site" evidence="1">
    <location>
        <position position="124"/>
    </location>
    <ligand>
        <name>substrate</name>
    </ligand>
</feature>
<reference key="1">
    <citation type="journal article" date="2002" name="Proc. Natl. Acad. Sci. U.S.A.">
        <title>The Brucella suis genome reveals fundamental similarities between animal and plant pathogens and symbionts.</title>
        <authorList>
            <person name="Paulsen I.T."/>
            <person name="Seshadri R."/>
            <person name="Nelson K.E."/>
            <person name="Eisen J.A."/>
            <person name="Heidelberg J.F."/>
            <person name="Read T.D."/>
            <person name="Dodson R.J."/>
            <person name="Umayam L.A."/>
            <person name="Brinkac L.M."/>
            <person name="Beanan M.J."/>
            <person name="Daugherty S.C."/>
            <person name="DeBoy R.T."/>
            <person name="Durkin A.S."/>
            <person name="Kolonay J.F."/>
            <person name="Madupu R."/>
            <person name="Nelson W.C."/>
            <person name="Ayodeji B."/>
            <person name="Kraul M."/>
            <person name="Shetty J."/>
            <person name="Malek J.A."/>
            <person name="Van Aken S.E."/>
            <person name="Riedmuller S."/>
            <person name="Tettelin H."/>
            <person name="Gill S.R."/>
            <person name="White O."/>
            <person name="Salzberg S.L."/>
            <person name="Hoover D.L."/>
            <person name="Lindler L.E."/>
            <person name="Halling S.M."/>
            <person name="Boyle S.M."/>
            <person name="Fraser C.M."/>
        </authorList>
    </citation>
    <scope>NUCLEOTIDE SEQUENCE [LARGE SCALE GENOMIC DNA]</scope>
    <source>
        <strain>1330</strain>
    </source>
</reference>
<reference key="2">
    <citation type="journal article" date="2011" name="J. Bacteriol.">
        <title>Revised genome sequence of Brucella suis 1330.</title>
        <authorList>
            <person name="Tae H."/>
            <person name="Shallom S."/>
            <person name="Settlage R."/>
            <person name="Preston D."/>
            <person name="Adams L.G."/>
            <person name="Garner H.R."/>
        </authorList>
    </citation>
    <scope>NUCLEOTIDE SEQUENCE [LARGE SCALE GENOMIC DNA]</scope>
    <source>
        <strain>1330</strain>
    </source>
</reference>
<protein>
    <recommendedName>
        <fullName evidence="1">Ribose-5-phosphate isomerase A</fullName>
        <ecNumber evidence="1">5.3.1.6</ecNumber>
    </recommendedName>
    <alternativeName>
        <fullName evidence="1">Phosphoriboisomerase A</fullName>
        <shortName evidence="1">PRI</shortName>
    </alternativeName>
</protein>
<sequence length="232" mass="24264">MDEARKLKIAAAAEALTYVKDGMRLGIGTGSTAEEFVRLLAEKVKGGFRVIGVPTSERTAKLCEELGVALTTLEETPHLDLTIDGADEVDGELSLIKGGGGALLREKIVAAASDSMIVIADQSKVVETLGRFPLPIEVNRFGLGATIRAIEAAAVKCGLAGPLNLRLKDGSPFLTDGGHYIVDASFGRIPDPKTLSDALFAIPGVVEHGLFIGLARAAIIAGTDGIRTMNRS</sequence>
<evidence type="ECO:0000255" key="1">
    <source>
        <dbReference type="HAMAP-Rule" id="MF_00170"/>
    </source>
</evidence>
<name>RPIA_BRUSU</name>
<gene>
    <name evidence="1" type="primary">rpiA</name>
    <name type="ordered locus">BR1010</name>
    <name type="ordered locus">BS1330_I1006</name>
</gene>
<comment type="function">
    <text evidence="1">Catalyzes the reversible conversion of ribose-5-phosphate to ribulose 5-phosphate.</text>
</comment>
<comment type="catalytic activity">
    <reaction evidence="1">
        <text>aldehydo-D-ribose 5-phosphate = D-ribulose 5-phosphate</text>
        <dbReference type="Rhea" id="RHEA:14657"/>
        <dbReference type="ChEBI" id="CHEBI:58121"/>
        <dbReference type="ChEBI" id="CHEBI:58273"/>
        <dbReference type="EC" id="5.3.1.6"/>
    </reaction>
</comment>
<comment type="pathway">
    <text evidence="1">Carbohydrate degradation; pentose phosphate pathway; D-ribose 5-phosphate from D-ribulose 5-phosphate (non-oxidative stage): step 1/1.</text>
</comment>
<comment type="subunit">
    <text evidence="1">Homodimer.</text>
</comment>
<comment type="similarity">
    <text evidence="1">Belongs to the ribose 5-phosphate isomerase family.</text>
</comment>